<organism>
    <name type="scientific">Methylacidiphilum infernorum (isolate V4)</name>
    <name type="common">Methylokorus infernorum (strain V4)</name>
    <dbReference type="NCBI Taxonomy" id="481448"/>
    <lineage>
        <taxon>Bacteria</taxon>
        <taxon>Pseudomonadati</taxon>
        <taxon>Verrucomicrobiota</taxon>
        <taxon>Methylacidiphilae</taxon>
        <taxon>Methylacidiphilales</taxon>
        <taxon>Methylacidiphilaceae</taxon>
        <taxon>Methylacidiphilum (ex Ratnadevi et al. 2023)</taxon>
    </lineage>
</organism>
<dbReference type="EMBL" id="CP000975">
    <property type="protein sequence ID" value="ACD84027.1"/>
    <property type="molecule type" value="Genomic_DNA"/>
</dbReference>
<dbReference type="RefSeq" id="WP_012464309.1">
    <property type="nucleotide sequence ID" value="NC_010794.1"/>
</dbReference>
<dbReference type="SMR" id="B3DYH9"/>
<dbReference type="STRING" id="481448.Minf_1973"/>
<dbReference type="KEGG" id="min:Minf_1973"/>
<dbReference type="eggNOG" id="COG0292">
    <property type="taxonomic scope" value="Bacteria"/>
</dbReference>
<dbReference type="HOGENOM" id="CLU_123265_0_1_0"/>
<dbReference type="OrthoDB" id="9808966at2"/>
<dbReference type="Proteomes" id="UP000009149">
    <property type="component" value="Chromosome"/>
</dbReference>
<dbReference type="GO" id="GO:1990904">
    <property type="term" value="C:ribonucleoprotein complex"/>
    <property type="evidence" value="ECO:0007669"/>
    <property type="project" value="UniProtKB-KW"/>
</dbReference>
<dbReference type="GO" id="GO:0005840">
    <property type="term" value="C:ribosome"/>
    <property type="evidence" value="ECO:0007669"/>
    <property type="project" value="UniProtKB-KW"/>
</dbReference>
<dbReference type="GO" id="GO:0019843">
    <property type="term" value="F:rRNA binding"/>
    <property type="evidence" value="ECO:0007669"/>
    <property type="project" value="UniProtKB-UniRule"/>
</dbReference>
<dbReference type="GO" id="GO:0003735">
    <property type="term" value="F:structural constituent of ribosome"/>
    <property type="evidence" value="ECO:0007669"/>
    <property type="project" value="InterPro"/>
</dbReference>
<dbReference type="GO" id="GO:0000027">
    <property type="term" value="P:ribosomal large subunit assembly"/>
    <property type="evidence" value="ECO:0007669"/>
    <property type="project" value="UniProtKB-UniRule"/>
</dbReference>
<dbReference type="GO" id="GO:0006412">
    <property type="term" value="P:translation"/>
    <property type="evidence" value="ECO:0007669"/>
    <property type="project" value="InterPro"/>
</dbReference>
<dbReference type="CDD" id="cd07026">
    <property type="entry name" value="Ribosomal_L20"/>
    <property type="match status" value="1"/>
</dbReference>
<dbReference type="FunFam" id="1.10.1900.20:FF:000001">
    <property type="entry name" value="50S ribosomal protein L20"/>
    <property type="match status" value="1"/>
</dbReference>
<dbReference type="Gene3D" id="6.10.160.10">
    <property type="match status" value="1"/>
</dbReference>
<dbReference type="Gene3D" id="1.10.1900.20">
    <property type="entry name" value="Ribosomal protein L20"/>
    <property type="match status" value="1"/>
</dbReference>
<dbReference type="HAMAP" id="MF_00382">
    <property type="entry name" value="Ribosomal_bL20"/>
    <property type="match status" value="1"/>
</dbReference>
<dbReference type="InterPro" id="IPR005813">
    <property type="entry name" value="Ribosomal_bL20"/>
</dbReference>
<dbReference type="InterPro" id="IPR049946">
    <property type="entry name" value="RIBOSOMAL_L20_CS"/>
</dbReference>
<dbReference type="InterPro" id="IPR035566">
    <property type="entry name" value="Ribosomal_protein_bL20_C"/>
</dbReference>
<dbReference type="NCBIfam" id="TIGR01032">
    <property type="entry name" value="rplT_bact"/>
    <property type="match status" value="1"/>
</dbReference>
<dbReference type="PANTHER" id="PTHR10986">
    <property type="entry name" value="39S RIBOSOMAL PROTEIN L20"/>
    <property type="match status" value="1"/>
</dbReference>
<dbReference type="Pfam" id="PF00453">
    <property type="entry name" value="Ribosomal_L20"/>
    <property type="match status" value="1"/>
</dbReference>
<dbReference type="PRINTS" id="PR00062">
    <property type="entry name" value="RIBOSOMALL20"/>
</dbReference>
<dbReference type="SUPFAM" id="SSF74731">
    <property type="entry name" value="Ribosomal protein L20"/>
    <property type="match status" value="1"/>
</dbReference>
<dbReference type="PROSITE" id="PS00937">
    <property type="entry name" value="RIBOSOMAL_L20"/>
    <property type="match status" value="1"/>
</dbReference>
<evidence type="ECO:0000255" key="1">
    <source>
        <dbReference type="HAMAP-Rule" id="MF_00382"/>
    </source>
</evidence>
<evidence type="ECO:0000305" key="2"/>
<gene>
    <name evidence="1" type="primary">rplT</name>
    <name type="ordered locus">Minf_1973</name>
</gene>
<proteinExistence type="inferred from homology"/>
<keyword id="KW-0687">Ribonucleoprotein</keyword>
<keyword id="KW-0689">Ribosomal protein</keyword>
<keyword id="KW-0694">RNA-binding</keyword>
<keyword id="KW-0699">rRNA-binding</keyword>
<sequence length="120" mass="14392">MARATNAPQSRKRRKRLLRDARGFRGRRSKLFRYAKDALYKARYWSYRDRKNRKREFRALWIQRINAACRKRGMTYSRFMEALRKAGIGVNRKMLAELAVRSQEDFDQIFKLAKEGNLAS</sequence>
<accession>B3DYH9</accession>
<protein>
    <recommendedName>
        <fullName evidence="1">Large ribosomal subunit protein bL20</fullName>
    </recommendedName>
    <alternativeName>
        <fullName evidence="2">50S ribosomal protein L20</fullName>
    </alternativeName>
</protein>
<reference key="1">
    <citation type="journal article" date="2008" name="Biol. Direct">
        <title>Complete genome sequence of the extremely acidophilic methanotroph isolate V4, Methylacidiphilum infernorum, a representative of the bacterial phylum Verrucomicrobia.</title>
        <authorList>
            <person name="Hou S."/>
            <person name="Makarova K.S."/>
            <person name="Saw J.H."/>
            <person name="Senin P."/>
            <person name="Ly B.V."/>
            <person name="Zhou Z."/>
            <person name="Ren Y."/>
            <person name="Wang J."/>
            <person name="Galperin M.Y."/>
            <person name="Omelchenko M.V."/>
            <person name="Wolf Y.I."/>
            <person name="Yutin N."/>
            <person name="Koonin E.V."/>
            <person name="Stott M.B."/>
            <person name="Mountain B.W."/>
            <person name="Crowe M.A."/>
            <person name="Smirnova A.V."/>
            <person name="Dunfield P.F."/>
            <person name="Feng L."/>
            <person name="Wang L."/>
            <person name="Alam M."/>
        </authorList>
    </citation>
    <scope>NUCLEOTIDE SEQUENCE [LARGE SCALE GENOMIC DNA]</scope>
    <source>
        <strain>Isolate V4</strain>
    </source>
</reference>
<name>RL20_METI4</name>
<comment type="function">
    <text evidence="1">Binds directly to 23S ribosomal RNA and is necessary for the in vitro assembly process of the 50S ribosomal subunit. It is not involved in the protein synthesizing functions of that subunit.</text>
</comment>
<comment type="similarity">
    <text evidence="1">Belongs to the bacterial ribosomal protein bL20 family.</text>
</comment>
<feature type="chain" id="PRO_1000122336" description="Large ribosomal subunit protein bL20">
    <location>
        <begin position="1"/>
        <end position="120"/>
    </location>
</feature>